<name>DUT_BAUCH</name>
<organism>
    <name type="scientific">Baumannia cicadellinicola subsp. Homalodisca coagulata</name>
    <dbReference type="NCBI Taxonomy" id="374463"/>
    <lineage>
        <taxon>Bacteria</taxon>
        <taxon>Pseudomonadati</taxon>
        <taxon>Pseudomonadota</taxon>
        <taxon>Gammaproteobacteria</taxon>
        <taxon>Candidatus Palibaumannia</taxon>
    </lineage>
</organism>
<protein>
    <recommendedName>
        <fullName evidence="1">Deoxyuridine 5'-triphosphate nucleotidohydrolase</fullName>
        <shortName evidence="1">dUTPase</shortName>
        <ecNumber evidence="1">3.6.1.23</ecNumber>
    </recommendedName>
    <alternativeName>
        <fullName evidence="1">dUTP pyrophosphatase</fullName>
    </alternativeName>
</protein>
<accession>Q1LTS1</accession>
<feature type="chain" id="PRO_1000057765" description="Deoxyuridine 5'-triphosphate nucleotidohydrolase">
    <location>
        <begin position="1"/>
        <end position="150"/>
    </location>
</feature>
<feature type="binding site" evidence="1">
    <location>
        <begin position="70"/>
        <end position="72"/>
    </location>
    <ligand>
        <name>substrate</name>
    </ligand>
</feature>
<feature type="binding site" evidence="1">
    <location>
        <position position="82"/>
    </location>
    <ligand>
        <name>substrate</name>
    </ligand>
</feature>
<feature type="binding site" evidence="1">
    <location>
        <begin position="86"/>
        <end position="88"/>
    </location>
    <ligand>
        <name>substrate</name>
    </ligand>
</feature>
<feature type="binding site" evidence="1">
    <location>
        <position position="96"/>
    </location>
    <ligand>
        <name>substrate</name>
    </ligand>
</feature>
<dbReference type="EC" id="3.6.1.23" evidence="1"/>
<dbReference type="EMBL" id="CP000238">
    <property type="protein sequence ID" value="ABF14111.1"/>
    <property type="molecule type" value="Genomic_DNA"/>
</dbReference>
<dbReference type="SMR" id="Q1LTS1"/>
<dbReference type="STRING" id="374463.BCI_0182"/>
<dbReference type="KEGG" id="bci:BCI_0182"/>
<dbReference type="HOGENOM" id="CLU_068508_1_1_6"/>
<dbReference type="UniPathway" id="UPA00610">
    <property type="reaction ID" value="UER00666"/>
</dbReference>
<dbReference type="Proteomes" id="UP000002427">
    <property type="component" value="Chromosome"/>
</dbReference>
<dbReference type="GO" id="GO:0004170">
    <property type="term" value="F:dUTP diphosphatase activity"/>
    <property type="evidence" value="ECO:0007669"/>
    <property type="project" value="UniProtKB-UniRule"/>
</dbReference>
<dbReference type="GO" id="GO:0000287">
    <property type="term" value="F:magnesium ion binding"/>
    <property type="evidence" value="ECO:0007669"/>
    <property type="project" value="UniProtKB-UniRule"/>
</dbReference>
<dbReference type="GO" id="GO:0006226">
    <property type="term" value="P:dUMP biosynthetic process"/>
    <property type="evidence" value="ECO:0007669"/>
    <property type="project" value="UniProtKB-UniRule"/>
</dbReference>
<dbReference type="GO" id="GO:0046081">
    <property type="term" value="P:dUTP catabolic process"/>
    <property type="evidence" value="ECO:0007669"/>
    <property type="project" value="InterPro"/>
</dbReference>
<dbReference type="CDD" id="cd07557">
    <property type="entry name" value="trimeric_dUTPase"/>
    <property type="match status" value="1"/>
</dbReference>
<dbReference type="FunFam" id="2.70.40.10:FF:000002">
    <property type="entry name" value="dUTP diphosphatase"/>
    <property type="match status" value="1"/>
</dbReference>
<dbReference type="Gene3D" id="2.70.40.10">
    <property type="match status" value="1"/>
</dbReference>
<dbReference type="HAMAP" id="MF_00116">
    <property type="entry name" value="dUTPase_bact"/>
    <property type="match status" value="1"/>
</dbReference>
<dbReference type="InterPro" id="IPR008181">
    <property type="entry name" value="dUTPase"/>
</dbReference>
<dbReference type="InterPro" id="IPR029054">
    <property type="entry name" value="dUTPase-like"/>
</dbReference>
<dbReference type="InterPro" id="IPR036157">
    <property type="entry name" value="dUTPase-like_sf"/>
</dbReference>
<dbReference type="InterPro" id="IPR033704">
    <property type="entry name" value="dUTPase_trimeric"/>
</dbReference>
<dbReference type="NCBIfam" id="TIGR00576">
    <property type="entry name" value="dut"/>
    <property type="match status" value="1"/>
</dbReference>
<dbReference type="NCBIfam" id="NF001862">
    <property type="entry name" value="PRK00601.1"/>
    <property type="match status" value="1"/>
</dbReference>
<dbReference type="PANTHER" id="PTHR11241">
    <property type="entry name" value="DEOXYURIDINE 5'-TRIPHOSPHATE NUCLEOTIDOHYDROLASE"/>
    <property type="match status" value="1"/>
</dbReference>
<dbReference type="PANTHER" id="PTHR11241:SF0">
    <property type="entry name" value="DEOXYURIDINE 5'-TRIPHOSPHATE NUCLEOTIDOHYDROLASE"/>
    <property type="match status" value="1"/>
</dbReference>
<dbReference type="Pfam" id="PF00692">
    <property type="entry name" value="dUTPase"/>
    <property type="match status" value="1"/>
</dbReference>
<dbReference type="SUPFAM" id="SSF51283">
    <property type="entry name" value="dUTPase-like"/>
    <property type="match status" value="1"/>
</dbReference>
<comment type="function">
    <text evidence="1">This enzyme is involved in nucleotide metabolism: it produces dUMP, the immediate precursor of thymidine nucleotides and it decreases the intracellular concentration of dUTP so that uracil cannot be incorporated into DNA.</text>
</comment>
<comment type="catalytic activity">
    <reaction evidence="1">
        <text>dUTP + H2O = dUMP + diphosphate + H(+)</text>
        <dbReference type="Rhea" id="RHEA:10248"/>
        <dbReference type="ChEBI" id="CHEBI:15377"/>
        <dbReference type="ChEBI" id="CHEBI:15378"/>
        <dbReference type="ChEBI" id="CHEBI:33019"/>
        <dbReference type="ChEBI" id="CHEBI:61555"/>
        <dbReference type="ChEBI" id="CHEBI:246422"/>
        <dbReference type="EC" id="3.6.1.23"/>
    </reaction>
</comment>
<comment type="cofactor">
    <cofactor evidence="1">
        <name>Mg(2+)</name>
        <dbReference type="ChEBI" id="CHEBI:18420"/>
    </cofactor>
</comment>
<comment type="pathway">
    <text evidence="1">Pyrimidine metabolism; dUMP biosynthesis; dUMP from dCTP (dUTP route): step 2/2.</text>
</comment>
<comment type="similarity">
    <text evidence="1">Belongs to the dUTPase family.</text>
</comment>
<proteinExistence type="inferred from homology"/>
<gene>
    <name evidence="1" type="primary">dut</name>
    <name type="ordered locus">BCI_0182</name>
</gene>
<evidence type="ECO:0000255" key="1">
    <source>
        <dbReference type="HAMAP-Rule" id="MF_00116"/>
    </source>
</evidence>
<keyword id="KW-0378">Hydrolase</keyword>
<keyword id="KW-0460">Magnesium</keyword>
<keyword id="KW-0479">Metal-binding</keyword>
<keyword id="KW-0546">Nucleotide metabolism</keyword>
<keyword id="KW-1185">Reference proteome</keyword>
<reference key="1">
    <citation type="journal article" date="2006" name="PLoS Biol.">
        <title>Metabolic complementarity and genomics of the dual bacterial symbiosis of sharpshooters.</title>
        <authorList>
            <person name="Wu D."/>
            <person name="Daugherty S.C."/>
            <person name="Van Aken S.E."/>
            <person name="Pai G.H."/>
            <person name="Watkins K.L."/>
            <person name="Khouri H."/>
            <person name="Tallon L.J."/>
            <person name="Zaborsky J.M."/>
            <person name="Dunbar H.E."/>
            <person name="Tran P.L."/>
            <person name="Moran N.A."/>
            <person name="Eisen J.A."/>
        </authorList>
    </citation>
    <scope>NUCLEOTIDE SEQUENCE [LARGE SCALE GENOMIC DNA]</scope>
</reference>
<sequence length="150" mass="16331">MKKIDIKILDSRIGDCFKLPKYATPGSAGIDLRACIDNTISLEPGETNLISTGLAVHIADTGLAGIIIPRSGLGHHGIVLGNLVGLIDSDYQGSIMVSLWNRGKEIFTIQPNERIAQIVFVQIVQVYFNIVDNFQKSKRGERGFGHSGRV</sequence>